<proteinExistence type="inferred from homology"/>
<feature type="chain" id="PRO_0000122730" description="Protein RecA">
    <location>
        <begin position="1" status="less than"/>
        <end position="104" status="greater than"/>
    </location>
</feature>
<feature type="non-terminal residue">
    <location>
        <position position="1"/>
    </location>
</feature>
<feature type="non-terminal residue">
    <location>
        <position position="104"/>
    </location>
</feature>
<comment type="function">
    <text evidence="1">Can catalyze the hydrolysis of ATP in the presence of single-stranded DNA, the ATP-dependent uptake of single-stranded DNA by duplex DNA, and the ATP-dependent hybridization of homologous single-stranded DNAs. It interacts with LexA causing its activation and leading to its autocatalytic cleavage (By similarity).</text>
</comment>
<comment type="subcellular location">
    <subcellularLocation>
        <location evidence="1">Cytoplasm</location>
    </subcellularLocation>
</comment>
<comment type="similarity">
    <text evidence="2">Belongs to the RecA family.</text>
</comment>
<accession>Q02347</accession>
<organism>
    <name type="scientific">Lactobacillus delbrueckii subsp. bulgaricus</name>
    <dbReference type="NCBI Taxonomy" id="1585"/>
    <lineage>
        <taxon>Bacteria</taxon>
        <taxon>Bacillati</taxon>
        <taxon>Bacillota</taxon>
        <taxon>Bacilli</taxon>
        <taxon>Lactobacillales</taxon>
        <taxon>Lactobacillaceae</taxon>
        <taxon>Lactobacillus</taxon>
    </lineage>
</organism>
<name>RECA_LACDE</name>
<dbReference type="EMBL" id="M94058">
    <property type="protein sequence ID" value="AAA25251.1"/>
    <property type="molecule type" value="Genomic_DNA"/>
</dbReference>
<dbReference type="PIR" id="B42721">
    <property type="entry name" value="B42721"/>
</dbReference>
<dbReference type="SMR" id="Q02347"/>
<dbReference type="GO" id="GO:0005829">
    <property type="term" value="C:cytosol"/>
    <property type="evidence" value="ECO:0007669"/>
    <property type="project" value="TreeGrafter"/>
</dbReference>
<dbReference type="GO" id="GO:0005524">
    <property type="term" value="F:ATP binding"/>
    <property type="evidence" value="ECO:0007669"/>
    <property type="project" value="UniProtKB-KW"/>
</dbReference>
<dbReference type="GO" id="GO:0140664">
    <property type="term" value="F:ATP-dependent DNA damage sensor activity"/>
    <property type="evidence" value="ECO:0007669"/>
    <property type="project" value="InterPro"/>
</dbReference>
<dbReference type="GO" id="GO:0003697">
    <property type="term" value="F:single-stranded DNA binding"/>
    <property type="evidence" value="ECO:0007669"/>
    <property type="project" value="InterPro"/>
</dbReference>
<dbReference type="GO" id="GO:0006310">
    <property type="term" value="P:DNA recombination"/>
    <property type="evidence" value="ECO:0007669"/>
    <property type="project" value="UniProtKB-KW"/>
</dbReference>
<dbReference type="GO" id="GO:0006281">
    <property type="term" value="P:DNA repair"/>
    <property type="evidence" value="ECO:0007669"/>
    <property type="project" value="UniProtKB-KW"/>
</dbReference>
<dbReference type="GO" id="GO:0009432">
    <property type="term" value="P:SOS response"/>
    <property type="evidence" value="ECO:0007669"/>
    <property type="project" value="UniProtKB-KW"/>
</dbReference>
<dbReference type="Gene3D" id="3.40.50.300">
    <property type="entry name" value="P-loop containing nucleotide triphosphate hydrolases"/>
    <property type="match status" value="1"/>
</dbReference>
<dbReference type="InterPro" id="IPR013765">
    <property type="entry name" value="DNA_recomb/repair_RecA"/>
</dbReference>
<dbReference type="InterPro" id="IPR027417">
    <property type="entry name" value="P-loop_NTPase"/>
</dbReference>
<dbReference type="InterPro" id="IPR049428">
    <property type="entry name" value="RecA-like_N"/>
</dbReference>
<dbReference type="InterPro" id="IPR020588">
    <property type="entry name" value="RecA_ATP-bd"/>
</dbReference>
<dbReference type="PANTHER" id="PTHR45900:SF1">
    <property type="entry name" value="MITOCHONDRIAL DNA REPAIR PROTEIN RECA HOMOLOG-RELATED"/>
    <property type="match status" value="1"/>
</dbReference>
<dbReference type="PANTHER" id="PTHR45900">
    <property type="entry name" value="RECA"/>
    <property type="match status" value="1"/>
</dbReference>
<dbReference type="Pfam" id="PF00154">
    <property type="entry name" value="RecA"/>
    <property type="match status" value="1"/>
</dbReference>
<dbReference type="PRINTS" id="PR00142">
    <property type="entry name" value="RECA"/>
</dbReference>
<dbReference type="SUPFAM" id="SSF52540">
    <property type="entry name" value="P-loop containing nucleoside triphosphate hydrolases"/>
    <property type="match status" value="1"/>
</dbReference>
<dbReference type="PROSITE" id="PS50162">
    <property type="entry name" value="RECA_2"/>
    <property type="match status" value="1"/>
</dbReference>
<gene>
    <name type="primary">recA</name>
</gene>
<evidence type="ECO:0000250" key="1"/>
<evidence type="ECO:0000305" key="2"/>
<protein>
    <recommendedName>
        <fullName>Protein RecA</fullName>
    </recommendedName>
    <alternativeName>
        <fullName>Recombinase A</fullName>
    </alternativeName>
</protein>
<reference key="1">
    <citation type="journal article" date="1992" name="J. Bacteriol.">
        <title>A general method for cloning recA genes of Gram-positive bacteria by polymerase chain reaction.</title>
        <authorList>
            <person name="Duwat P."/>
            <person name="Ehrlich S.D."/>
            <person name="Gruss A."/>
        </authorList>
    </citation>
    <scope>NUCLEOTIDE SEQUENCE [GENOMIC DNA]</scope>
    <source>
        <strain>IL431</strain>
    </source>
</reference>
<sequence length="104" mass="10992">AYAEALGVDIDQLILSQPNTGEEGLQIADTLISSGAIDIVVVDSVAVLVPRAEIEGEMGDSHVGLQARLMSQALRKLSGTIAKTKTIAIFINQIREKVGVMFGN</sequence>
<keyword id="KW-0067">ATP-binding</keyword>
<keyword id="KW-0963">Cytoplasm</keyword>
<keyword id="KW-0227">DNA damage</keyword>
<keyword id="KW-0233">DNA recombination</keyword>
<keyword id="KW-0234">DNA repair</keyword>
<keyword id="KW-0238">DNA-binding</keyword>
<keyword id="KW-0547">Nucleotide-binding</keyword>
<keyword id="KW-0742">SOS response</keyword>